<reference key="1">
    <citation type="journal article" date="2005" name="Science">
        <title>The transcriptional landscape of the mammalian genome.</title>
        <authorList>
            <person name="Carninci P."/>
            <person name="Kasukawa T."/>
            <person name="Katayama S."/>
            <person name="Gough J."/>
            <person name="Frith M.C."/>
            <person name="Maeda N."/>
            <person name="Oyama R."/>
            <person name="Ravasi T."/>
            <person name="Lenhard B."/>
            <person name="Wells C."/>
            <person name="Kodzius R."/>
            <person name="Shimokawa K."/>
            <person name="Bajic V.B."/>
            <person name="Brenner S.E."/>
            <person name="Batalov S."/>
            <person name="Forrest A.R."/>
            <person name="Zavolan M."/>
            <person name="Davis M.J."/>
            <person name="Wilming L.G."/>
            <person name="Aidinis V."/>
            <person name="Allen J.E."/>
            <person name="Ambesi-Impiombato A."/>
            <person name="Apweiler R."/>
            <person name="Aturaliya R.N."/>
            <person name="Bailey T.L."/>
            <person name="Bansal M."/>
            <person name="Baxter L."/>
            <person name="Beisel K.W."/>
            <person name="Bersano T."/>
            <person name="Bono H."/>
            <person name="Chalk A.M."/>
            <person name="Chiu K.P."/>
            <person name="Choudhary V."/>
            <person name="Christoffels A."/>
            <person name="Clutterbuck D.R."/>
            <person name="Crowe M.L."/>
            <person name="Dalla E."/>
            <person name="Dalrymple B.P."/>
            <person name="de Bono B."/>
            <person name="Della Gatta G."/>
            <person name="di Bernardo D."/>
            <person name="Down T."/>
            <person name="Engstrom P."/>
            <person name="Fagiolini M."/>
            <person name="Faulkner G."/>
            <person name="Fletcher C.F."/>
            <person name="Fukushima T."/>
            <person name="Furuno M."/>
            <person name="Futaki S."/>
            <person name="Gariboldi M."/>
            <person name="Georgii-Hemming P."/>
            <person name="Gingeras T.R."/>
            <person name="Gojobori T."/>
            <person name="Green R.E."/>
            <person name="Gustincich S."/>
            <person name="Harbers M."/>
            <person name="Hayashi Y."/>
            <person name="Hensch T.K."/>
            <person name="Hirokawa N."/>
            <person name="Hill D."/>
            <person name="Huminiecki L."/>
            <person name="Iacono M."/>
            <person name="Ikeo K."/>
            <person name="Iwama A."/>
            <person name="Ishikawa T."/>
            <person name="Jakt M."/>
            <person name="Kanapin A."/>
            <person name="Katoh M."/>
            <person name="Kawasawa Y."/>
            <person name="Kelso J."/>
            <person name="Kitamura H."/>
            <person name="Kitano H."/>
            <person name="Kollias G."/>
            <person name="Krishnan S.P."/>
            <person name="Kruger A."/>
            <person name="Kummerfeld S.K."/>
            <person name="Kurochkin I.V."/>
            <person name="Lareau L.F."/>
            <person name="Lazarevic D."/>
            <person name="Lipovich L."/>
            <person name="Liu J."/>
            <person name="Liuni S."/>
            <person name="McWilliam S."/>
            <person name="Madan Babu M."/>
            <person name="Madera M."/>
            <person name="Marchionni L."/>
            <person name="Matsuda H."/>
            <person name="Matsuzawa S."/>
            <person name="Miki H."/>
            <person name="Mignone F."/>
            <person name="Miyake S."/>
            <person name="Morris K."/>
            <person name="Mottagui-Tabar S."/>
            <person name="Mulder N."/>
            <person name="Nakano N."/>
            <person name="Nakauchi H."/>
            <person name="Ng P."/>
            <person name="Nilsson R."/>
            <person name="Nishiguchi S."/>
            <person name="Nishikawa S."/>
            <person name="Nori F."/>
            <person name="Ohara O."/>
            <person name="Okazaki Y."/>
            <person name="Orlando V."/>
            <person name="Pang K.C."/>
            <person name="Pavan W.J."/>
            <person name="Pavesi G."/>
            <person name="Pesole G."/>
            <person name="Petrovsky N."/>
            <person name="Piazza S."/>
            <person name="Reed J."/>
            <person name="Reid J.F."/>
            <person name="Ring B.Z."/>
            <person name="Ringwald M."/>
            <person name="Rost B."/>
            <person name="Ruan Y."/>
            <person name="Salzberg S.L."/>
            <person name="Sandelin A."/>
            <person name="Schneider C."/>
            <person name="Schoenbach C."/>
            <person name="Sekiguchi K."/>
            <person name="Semple C.A."/>
            <person name="Seno S."/>
            <person name="Sessa L."/>
            <person name="Sheng Y."/>
            <person name="Shibata Y."/>
            <person name="Shimada H."/>
            <person name="Shimada K."/>
            <person name="Silva D."/>
            <person name="Sinclair B."/>
            <person name="Sperling S."/>
            <person name="Stupka E."/>
            <person name="Sugiura K."/>
            <person name="Sultana R."/>
            <person name="Takenaka Y."/>
            <person name="Taki K."/>
            <person name="Tammoja K."/>
            <person name="Tan S.L."/>
            <person name="Tang S."/>
            <person name="Taylor M.S."/>
            <person name="Tegner J."/>
            <person name="Teichmann S.A."/>
            <person name="Ueda H.R."/>
            <person name="van Nimwegen E."/>
            <person name="Verardo R."/>
            <person name="Wei C.L."/>
            <person name="Yagi K."/>
            <person name="Yamanishi H."/>
            <person name="Zabarovsky E."/>
            <person name="Zhu S."/>
            <person name="Zimmer A."/>
            <person name="Hide W."/>
            <person name="Bult C."/>
            <person name="Grimmond S.M."/>
            <person name="Teasdale R.D."/>
            <person name="Liu E.T."/>
            <person name="Brusic V."/>
            <person name="Quackenbush J."/>
            <person name="Wahlestedt C."/>
            <person name="Mattick J.S."/>
            <person name="Hume D.A."/>
            <person name="Kai C."/>
            <person name="Sasaki D."/>
            <person name="Tomaru Y."/>
            <person name="Fukuda S."/>
            <person name="Kanamori-Katayama M."/>
            <person name="Suzuki M."/>
            <person name="Aoki J."/>
            <person name="Arakawa T."/>
            <person name="Iida J."/>
            <person name="Imamura K."/>
            <person name="Itoh M."/>
            <person name="Kato T."/>
            <person name="Kawaji H."/>
            <person name="Kawagashira N."/>
            <person name="Kawashima T."/>
            <person name="Kojima M."/>
            <person name="Kondo S."/>
            <person name="Konno H."/>
            <person name="Nakano K."/>
            <person name="Ninomiya N."/>
            <person name="Nishio T."/>
            <person name="Okada M."/>
            <person name="Plessy C."/>
            <person name="Shibata K."/>
            <person name="Shiraki T."/>
            <person name="Suzuki S."/>
            <person name="Tagami M."/>
            <person name="Waki K."/>
            <person name="Watahiki A."/>
            <person name="Okamura-Oho Y."/>
            <person name="Suzuki H."/>
            <person name="Kawai J."/>
            <person name="Hayashizaki Y."/>
        </authorList>
    </citation>
    <scope>NUCLEOTIDE SEQUENCE [LARGE SCALE MRNA]</scope>
    <source>
        <strain>C57BL/6J</strain>
        <tissue>Bone marrow</tissue>
        <tissue>Kidney</tissue>
    </source>
</reference>
<reference key="2">
    <citation type="journal article" date="2004" name="Genome Res.">
        <title>The status, quality, and expansion of the NIH full-length cDNA project: the Mammalian Gene Collection (MGC).</title>
        <authorList>
            <consortium name="The MGC Project Team"/>
        </authorList>
    </citation>
    <scope>NUCLEOTIDE SEQUENCE [LARGE SCALE MRNA]</scope>
    <source>
        <strain>NMRI</strain>
        <tissue>Mammary gland</tissue>
    </source>
</reference>
<reference key="3">
    <citation type="journal article" date="2009" name="Immunity">
        <title>The phagosomal proteome in interferon-gamma-activated macrophages.</title>
        <authorList>
            <person name="Trost M."/>
            <person name="English L."/>
            <person name="Lemieux S."/>
            <person name="Courcelles M."/>
            <person name="Desjardins M."/>
            <person name="Thibault P."/>
        </authorList>
    </citation>
    <scope>PHOSPHORYLATION [LARGE SCALE ANALYSIS] AT SER-27 AND SER-193</scope>
    <scope>IDENTIFICATION BY MASS SPECTROMETRY [LARGE SCALE ANALYSIS]</scope>
</reference>
<reference key="4">
    <citation type="journal article" date="2010" name="Cell">
        <title>A tissue-specific atlas of mouse protein phosphorylation and expression.</title>
        <authorList>
            <person name="Huttlin E.L."/>
            <person name="Jedrychowski M.P."/>
            <person name="Elias J.E."/>
            <person name="Goswami T."/>
            <person name="Rad R."/>
            <person name="Beausoleil S.A."/>
            <person name="Villen J."/>
            <person name="Haas W."/>
            <person name="Sowa M.E."/>
            <person name="Gygi S.P."/>
        </authorList>
    </citation>
    <scope>PHOSPHORYLATION [LARGE SCALE ANALYSIS] AT SER-193</scope>
    <scope>IDENTIFICATION BY MASS SPECTROMETRY [LARGE SCALE ANALYSIS]</scope>
    <source>
        <tissue>Spleen</tissue>
        <tissue>Testis</tissue>
    </source>
</reference>
<proteinExistence type="evidence at protein level"/>
<comment type="function">
    <text evidence="1">Tethering protein that creates contact site between the endoplasmic reticulum and late endosomes: localizes to late endosome membranes and contacts the endoplasmic reticulum via interaction with VAPA and VAPB.</text>
</comment>
<comment type="subunit">
    <text evidence="1">Homodimer. Interacts (via the MENTAL domain) with STARD3NL. Interacts (via FFAT motif) with VAPA. Interacts (via FFAT motif) with VAPB. Interacts (via FFAT motif) with MOSPD2 (via MSP domain).</text>
</comment>
<comment type="subcellular location">
    <subcellularLocation>
        <location evidence="1">Late endosome membrane</location>
        <topology evidence="3">Multi-pass membrane protein</topology>
    </subcellularLocation>
    <text evidence="1">Localizes to contact sites between the endoplasmic reticulum and late endosomes: associates with the endoplasmic reticulum membrane via interaction with VAPA, VAPB or MOSPD2.</text>
</comment>
<comment type="domain">
    <text evidence="1">The FFAT motif mediates interaction with VAPA, VAPB and MOSPD2.</text>
</comment>
<comment type="domain">
    <text evidence="1 2">The MENTAL domain anchors the protein in endosome membranes and exposes the START domain in the cytosol (By similarity). It binds cholesterol and mediates homotypic as well as heterotypic interactions between STARD3 and STARD3NL (By similarity).</text>
</comment>
<comment type="similarity">
    <text evidence="6">Belongs to the STARD3 family.</text>
</comment>
<keyword id="KW-0007">Acetylation</keyword>
<keyword id="KW-0967">Endosome</keyword>
<keyword id="KW-0472">Membrane</keyword>
<keyword id="KW-0597">Phosphoprotein</keyword>
<keyword id="KW-1185">Reference proteome</keyword>
<keyword id="KW-0812">Transmembrane</keyword>
<keyword id="KW-1133">Transmembrane helix</keyword>
<accession>Q9DCI3</accession>
<accession>Q3U8Q7</accession>
<accession>Q99J63</accession>
<accession>Q9D356</accession>
<dbReference type="EMBL" id="AK002760">
    <property type="protein sequence ID" value="BAB22337.1"/>
    <property type="molecule type" value="mRNA"/>
</dbReference>
<dbReference type="EMBL" id="AK152116">
    <property type="protein sequence ID" value="BAE30960.1"/>
    <property type="molecule type" value="mRNA"/>
</dbReference>
<dbReference type="EMBL" id="BC003334">
    <property type="protein sequence ID" value="AAH03334.1"/>
    <property type="molecule type" value="mRNA"/>
</dbReference>
<dbReference type="CCDS" id="CCDS26259.1"/>
<dbReference type="RefSeq" id="NP_077232.2">
    <property type="nucleotide sequence ID" value="NM_024270.3"/>
</dbReference>
<dbReference type="RefSeq" id="XP_030103316.1">
    <property type="nucleotide sequence ID" value="XM_030247456.1"/>
</dbReference>
<dbReference type="RefSeq" id="XP_036014110.1">
    <property type="nucleotide sequence ID" value="XM_036158217.1"/>
</dbReference>
<dbReference type="SMR" id="Q9DCI3"/>
<dbReference type="BioGRID" id="218022">
    <property type="interactions" value="1"/>
</dbReference>
<dbReference type="FunCoup" id="Q9DCI3">
    <property type="interactions" value="1382"/>
</dbReference>
<dbReference type="STRING" id="10090.ENSMUSP00000142680"/>
<dbReference type="iPTMnet" id="Q9DCI3"/>
<dbReference type="PhosphoSitePlus" id="Q9DCI3"/>
<dbReference type="SwissPalm" id="Q9DCI3"/>
<dbReference type="jPOST" id="Q9DCI3"/>
<dbReference type="PaxDb" id="10090-ENSMUSP00000037991"/>
<dbReference type="ProteomicsDB" id="258648"/>
<dbReference type="Pumba" id="Q9DCI3"/>
<dbReference type="Antibodypedia" id="3121">
    <property type="antibodies" value="31 antibodies from 17 providers"/>
</dbReference>
<dbReference type="DNASU" id="76205"/>
<dbReference type="Ensembl" id="ENSMUST00000039694.13">
    <property type="protein sequence ID" value="ENSMUSP00000037991.8"/>
    <property type="gene ID" value="ENSMUSG00000003062.14"/>
</dbReference>
<dbReference type="Ensembl" id="ENSMUST00000197565.3">
    <property type="protein sequence ID" value="ENSMUSP00000152747.2"/>
    <property type="gene ID" value="ENSMUSG00000003062.14"/>
</dbReference>
<dbReference type="GeneID" id="76205"/>
<dbReference type="KEGG" id="mmu:76205"/>
<dbReference type="UCSC" id="uc007ppa.1">
    <property type="organism name" value="mouse"/>
</dbReference>
<dbReference type="AGR" id="MGI:1923455"/>
<dbReference type="CTD" id="83930"/>
<dbReference type="MGI" id="MGI:1923455">
    <property type="gene designation" value="Stard3nl"/>
</dbReference>
<dbReference type="VEuPathDB" id="HostDB:ENSMUSG00000003062"/>
<dbReference type="eggNOG" id="KOG3845">
    <property type="taxonomic scope" value="Eukaryota"/>
</dbReference>
<dbReference type="GeneTree" id="ENSGT00940000155476"/>
<dbReference type="HOGENOM" id="CLU_102230_0_0_1"/>
<dbReference type="InParanoid" id="Q9DCI3"/>
<dbReference type="OMA" id="HWWAVAI"/>
<dbReference type="PhylomeDB" id="Q9DCI3"/>
<dbReference type="TreeFam" id="TF313869"/>
<dbReference type="Reactome" id="R-MMU-196108">
    <property type="pathway name" value="Pregnenolone biosynthesis"/>
</dbReference>
<dbReference type="BioGRID-ORCS" id="76205">
    <property type="hits" value="1 hit in 78 CRISPR screens"/>
</dbReference>
<dbReference type="ChiTaRS" id="Stard3nl">
    <property type="organism name" value="mouse"/>
</dbReference>
<dbReference type="PRO" id="PR:Q9DCI3"/>
<dbReference type="Proteomes" id="UP000000589">
    <property type="component" value="Chromosome 13"/>
</dbReference>
<dbReference type="RNAct" id="Q9DCI3">
    <property type="molecule type" value="protein"/>
</dbReference>
<dbReference type="Bgee" id="ENSMUSG00000003062">
    <property type="expression patterns" value="Expressed in basioccipital bone and 289 other cell types or tissues"/>
</dbReference>
<dbReference type="ExpressionAtlas" id="Q9DCI3">
    <property type="expression patterns" value="baseline and differential"/>
</dbReference>
<dbReference type="GO" id="GO:0005789">
    <property type="term" value="C:endoplasmic reticulum membrane"/>
    <property type="evidence" value="ECO:0007669"/>
    <property type="project" value="Ensembl"/>
</dbReference>
<dbReference type="GO" id="GO:0140284">
    <property type="term" value="C:endoplasmic reticulum-endosome membrane contact site"/>
    <property type="evidence" value="ECO:0000250"/>
    <property type="project" value="UniProtKB"/>
</dbReference>
<dbReference type="GO" id="GO:0031902">
    <property type="term" value="C:late endosome membrane"/>
    <property type="evidence" value="ECO:0000250"/>
    <property type="project" value="UniProtKB"/>
</dbReference>
<dbReference type="GO" id="GO:0044232">
    <property type="term" value="C:organelle membrane contact site"/>
    <property type="evidence" value="ECO:0000250"/>
    <property type="project" value="UniProtKB"/>
</dbReference>
<dbReference type="GO" id="GO:0015485">
    <property type="term" value="F:cholesterol binding"/>
    <property type="evidence" value="ECO:0000250"/>
    <property type="project" value="UniProtKB"/>
</dbReference>
<dbReference type="GO" id="GO:0042803">
    <property type="term" value="F:protein homodimerization activity"/>
    <property type="evidence" value="ECO:0000250"/>
    <property type="project" value="UniProtKB"/>
</dbReference>
<dbReference type="GO" id="GO:0099044">
    <property type="term" value="P:vesicle tethering to endoplasmic reticulum"/>
    <property type="evidence" value="ECO:0000250"/>
    <property type="project" value="UniProtKB"/>
</dbReference>
<dbReference type="InterPro" id="IPR019498">
    <property type="entry name" value="MENTAL"/>
</dbReference>
<dbReference type="InterPro" id="IPR051869">
    <property type="entry name" value="STARD3"/>
</dbReference>
<dbReference type="PANTHER" id="PTHR46121:SF1">
    <property type="entry name" value="STARD3 N-TERMINAL-LIKE PROTEIN"/>
    <property type="match status" value="1"/>
</dbReference>
<dbReference type="PANTHER" id="PTHR46121">
    <property type="entry name" value="STEROIDOGENIC ACUTE REGULATORY PROTEIN-LIKE"/>
    <property type="match status" value="1"/>
</dbReference>
<dbReference type="Pfam" id="PF10457">
    <property type="entry name" value="MENTAL"/>
    <property type="match status" value="1"/>
</dbReference>
<dbReference type="PROSITE" id="PS51439">
    <property type="entry name" value="MENTAL"/>
    <property type="match status" value="1"/>
</dbReference>
<evidence type="ECO:0000250" key="1">
    <source>
        <dbReference type="UniProtKB" id="O95772"/>
    </source>
</evidence>
<evidence type="ECO:0000250" key="2">
    <source>
        <dbReference type="UniProtKB" id="Q14849"/>
    </source>
</evidence>
<evidence type="ECO:0000255" key="3"/>
<evidence type="ECO:0000255" key="4">
    <source>
        <dbReference type="PROSITE-ProRule" id="PRU00770"/>
    </source>
</evidence>
<evidence type="ECO:0000256" key="5">
    <source>
        <dbReference type="SAM" id="MobiDB-lite"/>
    </source>
</evidence>
<evidence type="ECO:0000305" key="6"/>
<evidence type="ECO:0000312" key="7">
    <source>
        <dbReference type="MGI" id="MGI:1923455"/>
    </source>
</evidence>
<evidence type="ECO:0007744" key="8">
    <source>
    </source>
</evidence>
<evidence type="ECO:0007744" key="9">
    <source>
    </source>
</evidence>
<name>STR3N_MOUSE</name>
<feature type="chain" id="PRO_0000096420" description="STARD3 N-terminal-like protein">
    <location>
        <begin position="1"/>
        <end position="235"/>
    </location>
</feature>
<feature type="topological domain" description="Cytoplasmic" evidence="1">
    <location>
        <begin position="1"/>
        <end position="53"/>
    </location>
</feature>
<feature type="transmembrane region" description="Helical" evidence="4">
    <location>
        <begin position="54"/>
        <end position="74"/>
    </location>
</feature>
<feature type="topological domain" description="Extracellular" evidence="3">
    <location>
        <begin position="75"/>
        <end position="97"/>
    </location>
</feature>
<feature type="transmembrane region" description="Helical" evidence="4">
    <location>
        <begin position="98"/>
        <end position="118"/>
    </location>
</feature>
<feature type="topological domain" description="Cytoplasmic" evidence="3">
    <location>
        <begin position="119"/>
        <end position="122"/>
    </location>
</feature>
<feature type="transmembrane region" description="Helical" evidence="4">
    <location>
        <begin position="123"/>
        <end position="143"/>
    </location>
</feature>
<feature type="topological domain" description="Extracellular" evidence="3">
    <location>
        <begin position="144"/>
        <end position="150"/>
    </location>
</feature>
<feature type="transmembrane region" description="Helical" evidence="4">
    <location>
        <begin position="151"/>
        <end position="171"/>
    </location>
</feature>
<feature type="topological domain" description="Cytoplasmic" evidence="1">
    <location>
        <begin position="172"/>
        <end position="235"/>
    </location>
</feature>
<feature type="domain" description="MENTAL" evidence="4">
    <location>
        <begin position="48"/>
        <end position="218"/>
    </location>
</feature>
<feature type="region of interest" description="Disordered" evidence="5">
    <location>
        <begin position="1"/>
        <end position="20"/>
    </location>
</feature>
<feature type="region of interest" description="Disordered" evidence="5">
    <location>
        <begin position="202"/>
        <end position="235"/>
    </location>
</feature>
<feature type="short sequence motif" description="FFAT" evidence="1">
    <location>
        <begin position="208"/>
        <end position="213"/>
    </location>
</feature>
<feature type="compositionally biased region" description="Polar residues" evidence="5">
    <location>
        <begin position="10"/>
        <end position="20"/>
    </location>
</feature>
<feature type="compositionally biased region" description="Basic and acidic residues" evidence="5">
    <location>
        <begin position="225"/>
        <end position="235"/>
    </location>
</feature>
<feature type="modified residue" description="N-acetylmethionine" evidence="1">
    <location>
        <position position="1"/>
    </location>
</feature>
<feature type="modified residue" description="Phosphoserine" evidence="1">
    <location>
        <position position="15"/>
    </location>
</feature>
<feature type="modified residue" description="Phosphoserine" evidence="1">
    <location>
        <position position="21"/>
    </location>
</feature>
<feature type="modified residue" description="Phosphoserine" evidence="8">
    <location>
        <position position="27"/>
    </location>
</feature>
<feature type="modified residue" description="Phosphoserine" evidence="8 9">
    <location>
        <position position="193"/>
    </location>
</feature>
<feature type="sequence conflict" description="In Ref. 1; BAB22337." evidence="6" ref="1">
    <original>QL</original>
    <variation>HS</variation>
    <location>
        <begin position="32"/>
        <end position="33"/>
    </location>
</feature>
<feature type="sequence conflict" description="In Ref. 2; AAH03334." evidence="6" ref="2">
    <original>R</original>
    <variation>G</variation>
    <location>
        <position position="52"/>
    </location>
</feature>
<sequence length="235" mass="26811">MNHLPEHMENTLTGSQSSHASLRDIHSINPAQLMARIESYEGREKKGISDVRRTFCLFVTFDLLFVTLLWIIELNVNGGIENTLKKEVIHYDYYSSYFDIFLLAVFRFKVLILGYAVCRLRHWWAIALTTAVTSAFLLAKVILSKLFSQGAFGYVLPIISFILAWIETWFLDFKVLPQEAEEENRLLLVQDASERAALIPAGLSDGQFYSPPESEAGSEEEAEEKQESEKPLLEL</sequence>
<gene>
    <name evidence="7" type="primary">Stard3nl</name>
    <name evidence="1" type="synonym">Mentho</name>
</gene>
<protein>
    <recommendedName>
        <fullName evidence="1">STARD3 N-terminal-like protein</fullName>
    </recommendedName>
    <alternativeName>
        <fullName evidence="1">MLN64 N-terminal domain homolog</fullName>
    </alternativeName>
</protein>
<organism>
    <name type="scientific">Mus musculus</name>
    <name type="common">Mouse</name>
    <dbReference type="NCBI Taxonomy" id="10090"/>
    <lineage>
        <taxon>Eukaryota</taxon>
        <taxon>Metazoa</taxon>
        <taxon>Chordata</taxon>
        <taxon>Craniata</taxon>
        <taxon>Vertebrata</taxon>
        <taxon>Euteleostomi</taxon>
        <taxon>Mammalia</taxon>
        <taxon>Eutheria</taxon>
        <taxon>Euarchontoglires</taxon>
        <taxon>Glires</taxon>
        <taxon>Rodentia</taxon>
        <taxon>Myomorpha</taxon>
        <taxon>Muroidea</taxon>
        <taxon>Muridae</taxon>
        <taxon>Murinae</taxon>
        <taxon>Mus</taxon>
        <taxon>Mus</taxon>
    </lineage>
</organism>